<dbReference type="EC" id="4.2.99.21" evidence="2 3 5 7"/>
<dbReference type="EC" id="5.4.99.5" evidence="2 5 7"/>
<dbReference type="EMBL" id="X82644">
    <property type="protein sequence ID" value="CAA57968.1"/>
    <property type="status" value="ALT_INIT"/>
    <property type="molecule type" value="Genomic_DNA"/>
</dbReference>
<dbReference type="EMBL" id="AE004091">
    <property type="protein sequence ID" value="AAG07618.1"/>
    <property type="molecule type" value="Genomic_DNA"/>
</dbReference>
<dbReference type="PIR" id="A83117">
    <property type="entry name" value="A83117"/>
</dbReference>
<dbReference type="PIR" id="S60202">
    <property type="entry name" value="S58228"/>
</dbReference>
<dbReference type="RefSeq" id="NP_252920.1">
    <property type="nucleotide sequence ID" value="NC_002516.2"/>
</dbReference>
<dbReference type="RefSeq" id="WP_003106950.1">
    <property type="nucleotide sequence ID" value="NZ_QZGE01000028.1"/>
</dbReference>
<dbReference type="PDB" id="2H9C">
    <property type="method" value="X-ray"/>
    <property type="resolution" value="2.35 A"/>
    <property type="chains" value="A/B=1-99"/>
</dbReference>
<dbReference type="PDB" id="2H9D">
    <property type="method" value="X-ray"/>
    <property type="resolution" value="1.95 A"/>
    <property type="chains" value="A/B/C/D=1-101"/>
</dbReference>
<dbReference type="PDB" id="3HGW">
    <property type="method" value="X-ray"/>
    <property type="resolution" value="2.25 A"/>
    <property type="chains" value="A/B/C/D=1-98"/>
</dbReference>
<dbReference type="PDB" id="3HGX">
    <property type="method" value="X-ray"/>
    <property type="resolution" value="2.50 A"/>
    <property type="chains" value="A/B=1-99"/>
</dbReference>
<dbReference type="PDB" id="3REM">
    <property type="method" value="X-ray"/>
    <property type="resolution" value="1.95 A"/>
    <property type="chains" value="A/B=1-101"/>
</dbReference>
<dbReference type="PDB" id="3RET">
    <property type="method" value="X-ray"/>
    <property type="resolution" value="1.79 A"/>
    <property type="chains" value="A/B=1-101"/>
</dbReference>
<dbReference type="PDBsum" id="2H9C"/>
<dbReference type="PDBsum" id="2H9D"/>
<dbReference type="PDBsum" id="3HGW"/>
<dbReference type="PDBsum" id="3HGX"/>
<dbReference type="PDBsum" id="3REM"/>
<dbReference type="PDBsum" id="3RET"/>
<dbReference type="SMR" id="Q51507"/>
<dbReference type="STRING" id="208964.PA4230"/>
<dbReference type="PaxDb" id="208964-PA4230"/>
<dbReference type="GeneID" id="881846"/>
<dbReference type="KEGG" id="pae:PA4230"/>
<dbReference type="PATRIC" id="fig|208964.12.peg.4431"/>
<dbReference type="PseudoCAP" id="PA4230"/>
<dbReference type="HOGENOM" id="CLU_131518_2_1_6"/>
<dbReference type="InParanoid" id="Q51507"/>
<dbReference type="OrthoDB" id="514491at2"/>
<dbReference type="PhylomeDB" id="Q51507"/>
<dbReference type="BioCyc" id="MetaCyc:MONOMER-15305"/>
<dbReference type="BioCyc" id="PAER208964:G1FZ6-4303-MONOMER"/>
<dbReference type="BRENDA" id="4.2.99.21">
    <property type="organism ID" value="5087"/>
</dbReference>
<dbReference type="SABIO-RK" id="Q51507"/>
<dbReference type="UniPathway" id="UPA00025"/>
<dbReference type="EvolutionaryTrace" id="Q51507"/>
<dbReference type="PHI-base" id="PHI:5058"/>
<dbReference type="Proteomes" id="UP000002438">
    <property type="component" value="Chromosome"/>
</dbReference>
<dbReference type="GO" id="GO:0016835">
    <property type="term" value="F:carbon-oxygen lyase activity"/>
    <property type="evidence" value="ECO:0000314"/>
    <property type="project" value="UniProtKB"/>
</dbReference>
<dbReference type="GO" id="GO:0004106">
    <property type="term" value="F:chorismate mutase activity"/>
    <property type="evidence" value="ECO:0000314"/>
    <property type="project" value="UniProtKB"/>
</dbReference>
<dbReference type="GO" id="GO:0043904">
    <property type="term" value="F:isochorismate pyruvate lyase activity"/>
    <property type="evidence" value="ECO:0007669"/>
    <property type="project" value="UniProtKB-EC"/>
</dbReference>
<dbReference type="GO" id="GO:0046417">
    <property type="term" value="P:chorismate metabolic process"/>
    <property type="evidence" value="ECO:0000318"/>
    <property type="project" value="GO_Central"/>
</dbReference>
<dbReference type="GO" id="GO:0042864">
    <property type="term" value="P:pyochelin biosynthetic process"/>
    <property type="evidence" value="ECO:0000314"/>
    <property type="project" value="UniProtKB"/>
</dbReference>
<dbReference type="GO" id="GO:0009697">
    <property type="term" value="P:salicylic acid biosynthetic process"/>
    <property type="evidence" value="ECO:0000314"/>
    <property type="project" value="PseudoCAP"/>
</dbReference>
<dbReference type="FunFam" id="1.20.59.10:FF:000012">
    <property type="entry name" value="Isochorismate pyruvate lyase"/>
    <property type="match status" value="1"/>
</dbReference>
<dbReference type="Gene3D" id="1.20.59.10">
    <property type="entry name" value="Chorismate mutase"/>
    <property type="match status" value="1"/>
</dbReference>
<dbReference type="InterPro" id="IPR036263">
    <property type="entry name" value="Chorismate_II_sf"/>
</dbReference>
<dbReference type="InterPro" id="IPR051331">
    <property type="entry name" value="Chorismate_mutase-related"/>
</dbReference>
<dbReference type="InterPro" id="IPR036979">
    <property type="entry name" value="CM_dom_sf"/>
</dbReference>
<dbReference type="InterPro" id="IPR002701">
    <property type="entry name" value="CM_II_prokaryot"/>
</dbReference>
<dbReference type="InterPro" id="IPR008241">
    <property type="entry name" value="Isochorismate_pyruvate-lyase"/>
</dbReference>
<dbReference type="NCBIfam" id="TIGR01803">
    <property type="entry name" value="CM-like"/>
    <property type="match status" value="1"/>
</dbReference>
<dbReference type="NCBIfam" id="NF005475">
    <property type="entry name" value="PRK07075.1"/>
    <property type="match status" value="1"/>
</dbReference>
<dbReference type="PANTHER" id="PTHR38041">
    <property type="entry name" value="CHORISMATE MUTASE"/>
    <property type="match status" value="1"/>
</dbReference>
<dbReference type="PANTHER" id="PTHR38041:SF1">
    <property type="entry name" value="CHORISMATE MUTASE"/>
    <property type="match status" value="1"/>
</dbReference>
<dbReference type="Pfam" id="PF01817">
    <property type="entry name" value="CM_2"/>
    <property type="match status" value="1"/>
</dbReference>
<dbReference type="PIRSF" id="PIRSF029775">
    <property type="entry name" value="Isochor_pyr_lyas"/>
    <property type="match status" value="1"/>
</dbReference>
<dbReference type="SMART" id="SM00830">
    <property type="entry name" value="CM_2"/>
    <property type="match status" value="1"/>
</dbReference>
<dbReference type="SUPFAM" id="SSF48600">
    <property type="entry name" value="Chorismate mutase II"/>
    <property type="match status" value="1"/>
</dbReference>
<dbReference type="PROSITE" id="PS51168">
    <property type="entry name" value="CHORISMATE_MUT_2"/>
    <property type="match status" value="1"/>
</dbReference>
<protein>
    <recommendedName>
        <fullName evidence="9">Isochorismate pyruvate lyase</fullName>
        <shortName evidence="9">IPL</shortName>
        <ecNumber evidence="2 3 5 7">4.2.99.21</ecNumber>
    </recommendedName>
    <alternativeName>
        <fullName evidence="9">Chorismate mutase</fullName>
        <shortName evidence="9">CM</shortName>
        <ecNumber evidence="2 5 7">5.4.99.5</ecNumber>
    </alternativeName>
    <alternativeName>
        <fullName evidence="12">Salicylate biosynthesis protein</fullName>
    </alternativeName>
</protein>
<keyword id="KW-0002">3D-structure</keyword>
<keyword id="KW-0903">Direct protein sequencing</keyword>
<keyword id="KW-0413">Isomerase</keyword>
<keyword id="KW-0456">Lyase</keyword>
<keyword id="KW-1185">Reference proteome</keyword>
<reference key="1">
    <citation type="journal article" date="1995" name="Mol. Gen. Genet.">
        <title>Structural genes for salicylate biosynthesis from chorismate in Pseudomonas aeruginosa.</title>
        <authorList>
            <person name="Serino L."/>
            <person name="Reimmann C."/>
            <person name="Baur H."/>
            <person name="Beyeler M."/>
            <person name="Visca P."/>
            <person name="Haas D."/>
        </authorList>
    </citation>
    <scope>NUCLEOTIDE SEQUENCE [GENOMIC DNA]</scope>
    <scope>FUNCTION</scope>
    <scope>PATHWAY</scope>
    <scope>INDUCTION</scope>
    <source>
        <strain>ATCC 15692 / DSM 22644 / CIP 104116 / JCM 14847 / LMG 12228 / 1C / PRS 101 / PAO1</strain>
    </source>
</reference>
<reference key="2">
    <citation type="journal article" date="2000" name="Nature">
        <title>Complete genome sequence of Pseudomonas aeruginosa PAO1, an opportunistic pathogen.</title>
        <authorList>
            <person name="Stover C.K."/>
            <person name="Pham X.-Q.T."/>
            <person name="Erwin A.L."/>
            <person name="Mizoguchi S.D."/>
            <person name="Warrener P."/>
            <person name="Hickey M.J."/>
            <person name="Brinkman F.S.L."/>
            <person name="Hufnagle W.O."/>
            <person name="Kowalik D.J."/>
            <person name="Lagrou M."/>
            <person name="Garber R.L."/>
            <person name="Goltry L."/>
            <person name="Tolentino E."/>
            <person name="Westbrock-Wadman S."/>
            <person name="Yuan Y."/>
            <person name="Brody L.L."/>
            <person name="Coulter S.N."/>
            <person name="Folger K.R."/>
            <person name="Kas A."/>
            <person name="Larbig K."/>
            <person name="Lim R.M."/>
            <person name="Smith K.A."/>
            <person name="Spencer D.H."/>
            <person name="Wong G.K.-S."/>
            <person name="Wu Z."/>
            <person name="Paulsen I.T."/>
            <person name="Reizer J."/>
            <person name="Saier M.H. Jr."/>
            <person name="Hancock R.E.W."/>
            <person name="Lory S."/>
            <person name="Olson M.V."/>
        </authorList>
    </citation>
    <scope>NUCLEOTIDE SEQUENCE [LARGE SCALE GENOMIC DNA]</scope>
    <source>
        <strain>ATCC 15692 / DSM 22644 / CIP 104116 / JCM 14847 / LMG 12228 / 1C / PRS 101 / PAO1</strain>
    </source>
</reference>
<reference key="3">
    <citation type="journal article" date="2002" name="J. Biol. Chem.">
        <title>Salicylate biosynthesis in Pseudomonas aeruginosa. Purification and characterization of PchB, a novel bifunctional enzyme displaying isochorismate pyruvate-lyase and chorismate mutase activities.</title>
        <authorList>
            <person name="Gaille C."/>
            <person name="Kast P."/>
            <person name="Haas D."/>
        </authorList>
    </citation>
    <scope>PROTEIN SEQUENCE OF 1-10</scope>
    <scope>FUNCTION</scope>
    <scope>CATALYTIC ACTIVITY</scope>
    <scope>BIOPHYSICOCHEMICAL PROPERTIES</scope>
    <scope>MUTAGENESIS OF ILE-87</scope>
    <scope>ACTIVITY REGULATION</scope>
    <scope>SUBUNIT</scope>
</reference>
<reference key="4">
    <citation type="journal article" date="2005" name="J. Am. Chem. Soc.">
        <title>Isochorismate pyruvate lyase: a pericyclic reaction mechanism?</title>
        <authorList>
            <person name="DeClue M.S."/>
            <person name="Baldridge K.K."/>
            <person name="Kuenzler D.E."/>
            <person name="Kast P."/>
            <person name="Hilvert D."/>
        </authorList>
    </citation>
    <scope>FUNCTION</scope>
    <scope>CATALYTIC ACTIVITY</scope>
    <scope>BIOPHYSICOCHEMICAL PROPERTIES</scope>
    <scope>REACTION MECHANISM</scope>
</reference>
<reference key="5">
    <citation type="journal article" date="2009" name="J. Am. Chem. Soc.">
        <title>Mechanism and plasticity of isochorismate pyruvate lyase: a computational study.</title>
        <authorList>
            <person name="Marti S."/>
            <person name="Andres J."/>
            <person name="Moliner V."/>
            <person name="Silla E."/>
            <person name="Tunon I."/>
            <person name="Bertran J."/>
        </authorList>
    </citation>
    <scope>MUTAGENESIS OF ALA-37</scope>
</reference>
<reference key="6">
    <citation type="journal article" date="2006" name="J. Biol. Chem.">
        <title>Two crystal structures of the isochorismate pyruvate lyase from Pseudomonas aeruginosa.</title>
        <authorList>
            <person name="Zaitseva J."/>
            <person name="Lu J."/>
            <person name="Olechoski K.L."/>
            <person name="Lamb A.L."/>
        </authorList>
    </citation>
    <scope>X-RAY CRYSTALLOGRAPHY (1.95 ANGSTROMS) IN COMPLEX WITH SUBSTRATE</scope>
    <scope>FUNCTION</scope>
    <scope>SUBUNIT</scope>
    <scope>REACTION MECHANISM</scope>
</reference>
<reference key="7">
    <citation type="journal article" date="2009" name="Biochemistry">
        <title>Structure-function analyses of isochorismate-pyruvate lyase from Pseudomonas aeruginosa suggest differing catalytic mechanisms for the two pericyclic reactions of this bifunctional enzyme.</title>
        <authorList>
            <person name="Luo Q."/>
            <person name="Olucha J."/>
            <person name="Lamb A.L."/>
        </authorList>
    </citation>
    <scope>X-RAY CRYSTALLOGRAPHY (2.25 ANGSTROMS) OF 1-98 OF MUTANTS ALA-42 AND THR-87 IN COMPLEX WITH SUBSTRATE</scope>
    <scope>FUNCTION</scope>
    <scope>CATALYTIC ACTIVITY</scope>
    <scope>MUTAGENESIS OF LYS-42 AND ILE-87</scope>
    <scope>BIOPHYSICOCHEMICAL PROPERTIES</scope>
    <scope>SUBUNIT</scope>
</reference>
<reference key="8">
    <citation type="journal article" date="2011" name="Biochemistry">
        <title>pH Dependence of catalysis by Pseudomonas aeruginosa isochorismate-pyruvate lyase: implications for transition state stabilization and the role of lysine 42.</title>
        <authorList>
            <person name="Olucha J."/>
            <person name="Ouellette A.N."/>
            <person name="Luo Q."/>
            <person name="Lamb A.L."/>
        </authorList>
    </citation>
    <scope>X-RAY CRYSTALLOGRAPHY (1.79 ANGSTROMS) OF WILD-TYPE AND MUTANT HIS-42 IN COMPLEX WITH SUBSTRATE</scope>
    <scope>FUNCTION</scope>
    <scope>CATALYTIC ACTIVITY</scope>
    <scope>MUTAGENESIS OF LYS-42</scope>
    <scope>SUBUNIT</scope>
</reference>
<proteinExistence type="evidence at protein level"/>
<gene>
    <name evidence="10" type="primary">pchB</name>
    <name type="ordered locus">PA4230</name>
</gene>
<feature type="chain" id="PRO_0000119198" description="Isochorismate pyruvate lyase">
    <location>
        <begin position="1"/>
        <end position="101"/>
    </location>
</feature>
<feature type="domain" description="Chorismate mutase" evidence="1">
    <location>
        <begin position="4"/>
        <end position="94"/>
    </location>
</feature>
<feature type="binding site" evidence="4 7">
    <location>
        <position position="14"/>
    </location>
    <ligand>
        <name>substrate</name>
    </ligand>
</feature>
<feature type="binding site" evidence="4 5 7">
    <location>
        <position position="31"/>
    </location>
    <ligand>
        <name>substrate</name>
    </ligand>
</feature>
<feature type="binding site" evidence="4 7">
    <location>
        <position position="42"/>
    </location>
    <ligand>
        <name>substrate</name>
    </ligand>
</feature>
<feature type="binding site" evidence="4 5 7">
    <location>
        <position position="90"/>
    </location>
    <ligand>
        <name>substrate</name>
    </ligand>
</feature>
<feature type="mutagenesis site" description="Increases the rate constant for the mutase activity by a factor of 1000, and also increases the lyase catalytic efficiency by a factor of 6." evidence="6">
    <original>A</original>
    <variation>I</variation>
    <location>
        <position position="37"/>
    </location>
</feature>
<feature type="mutagenesis site" description="Active across the entire pH range from 4 to 9. 11-fold reduction of the affinity for isochorismate and 7-fold reduction of the catalytic efficiency for lyase activity. 6-fold reduction of the affinity for chorismate and 15-fold reduction of the catalytic efficiency for mutase activity." evidence="5 7">
    <original>K</original>
    <variation>A</variation>
    <location>
        <position position="42"/>
    </location>
</feature>
<feature type="mutagenesis site" description="Loss of both lyase and mutase activity at any pH tested." evidence="5 7">
    <original>K</original>
    <variation>E</variation>
    <location>
        <position position="42"/>
    </location>
</feature>
<feature type="mutagenesis site" description="At pH 5, 15-fold reduction of the affinity for isochorismate, but only a slight reduction of the catalytic efficiency for lyase activity. At pH 7.5, 13-fold reduction of the affinity for isochorismate and 4-fold reduction of the catalytic efficiency for lyase activity. At pH 5, strong reduction of the affinity for chorismate, but only a 2-fold reduction of the catalytic efficiency for mutase activity. At pH 7.5, strong reduction of the affinity for chorismate, but only a slight reduction of the catalytic efficiency for mutase activity." evidence="5 7">
    <original>K</original>
    <variation>H</variation>
    <location>
        <position position="42"/>
    </location>
</feature>
<feature type="mutagenesis site" description="Loss of mutase activity. 15-fold reduction of the affinity for isochorismate and 3-fold reduction of the catalytic efficiency for isochorismate-pyruvate lyase activity." evidence="5">
    <original>K</original>
    <variation>Q</variation>
    <location>
        <position position="42"/>
    </location>
</feature>
<feature type="mutagenesis site" description="Slight reduction of the affinity for isochorismate and of the catalytic efficiency for isochorismate-pyruvate lyase activity. Slight reduction of the affinity for chorismate and of the catalytic efficiency for mutase activity." evidence="5">
    <original>A</original>
    <variation>P</variation>
    <location>
        <position position="43"/>
    </location>
</feature>
<feature type="mutagenesis site" description="4-fold reduction of the affinity for isochorismate and 3-fold reduction of the catalytic efficiency for isochorismate-pyruvate lyase activity. 4-fold reduction of the affinity for chorismate and 15-fold reduction of the catalytic efficiency for mutase activity." evidence="2 5">
    <original>I</original>
    <variation>T</variation>
    <location>
        <position position="87"/>
    </location>
</feature>
<feature type="helix" evidence="13">
    <location>
        <begin position="4"/>
        <end position="6"/>
    </location>
</feature>
<feature type="helix" evidence="13">
    <location>
        <begin position="10"/>
        <end position="38"/>
    </location>
</feature>
<feature type="helix" evidence="13">
    <location>
        <begin position="39"/>
        <end position="41"/>
    </location>
</feature>
<feature type="helix" evidence="13">
    <location>
        <begin position="45"/>
        <end position="47"/>
    </location>
</feature>
<feature type="helix" evidence="13">
    <location>
        <begin position="51"/>
        <end position="67"/>
    </location>
</feature>
<feature type="helix" evidence="13">
    <location>
        <begin position="72"/>
        <end position="96"/>
    </location>
</feature>
<comment type="function">
    <text evidence="2 3 4 5 7 8">Involved in the incorporation of salicylate into the siderophore pyochelin. Catalyzes the elimination of the enolpyruvyl side chain from isochorismate to yield salicylate and pyruvate via a rare pericyclic hydrogen transfer mechanism from C2 to C5. PchB also catalyzes the nonphysiological Claisen rearrangement of chorismate to prephenate in which the pyruvylenol tail is transferred from a C3 ether linkage to a C1-C9 linkage.</text>
</comment>
<comment type="catalytic activity">
    <reaction evidence="2 3 5 7">
        <text>isochorismate = salicylate + pyruvate</text>
        <dbReference type="Rhea" id="RHEA:27874"/>
        <dbReference type="ChEBI" id="CHEBI:15361"/>
        <dbReference type="ChEBI" id="CHEBI:29780"/>
        <dbReference type="ChEBI" id="CHEBI:30762"/>
        <dbReference type="EC" id="4.2.99.21"/>
    </reaction>
</comment>
<comment type="catalytic activity">
    <reaction evidence="2 5 7">
        <text>chorismate = prephenate</text>
        <dbReference type="Rhea" id="RHEA:13897"/>
        <dbReference type="ChEBI" id="CHEBI:29748"/>
        <dbReference type="ChEBI" id="CHEBI:29934"/>
        <dbReference type="EC" id="5.4.99.5"/>
    </reaction>
</comment>
<comment type="activity regulation">
    <text evidence="2">Inhibited by endo-oxabicyclic diacid resembling to the conformation of the transition state.</text>
</comment>
<comment type="biophysicochemical properties">
    <kinetics>
        <KM evidence="3">1.05 uM for isochorismate (at pH 7.5 and 30 degrees Celsius)</KM>
        <KM evidence="5">4.3 uM for isochorismate (at pH 7.5 and 22 degrees Celsius)</KM>
        <KM evidence="2">12.5 uM for isochorismate (at pH 7 and 30 degrees Celsius)</KM>
        <KM evidence="5">120 uM for chorismate (at pH 7.5 and 22 degrees Celsius)</KM>
        <KM evidence="2">150 uM for chorismate (at pH 7 and 30 degrees Celsius)</KM>
        <Vmax evidence="2">0.049 umol/min/mg enzyme for isochorismate pyruvate lyase activity (at pH 7 and 30 degrees Celsius)</Vmax>
        <Vmax evidence="2">0.034 umol/min/mg enzyme for chorismate mutase activity (at pH 7 and 30 degrees Celsius)</Vmax>
        <text evidence="2 3 5">kcat is 1.01 sec(-1) for lyase activity (at pH 7.5 and 22 degrees Celsius). kcat is 23.5 sec(-1) for chorismate mutase activity (at pH 7.5 and 22 degrees Celsius). kcat is 106 min(-1) for lyase activity (at pH 7 and 30 degrees Celsius). kcat is 177 sec(-1) for lyase activity (at pH 7.5 and 22 degrees Celsius). kcat is 78 min(-1) for mutase activity (at pH 7 and 30 degrees Celsius). kcat is 106 min(-1) for lyase activity (at pH 7 and 30 degrees Celsius).</text>
    </kinetics>
    <phDependence>
        <text evidence="2">Optimum pH is 6.8.</text>
    </phDependence>
</comment>
<comment type="pathway">
    <text evidence="8">Siderophore biosynthesis; salicylate biosynthesis.</text>
</comment>
<comment type="subunit">
    <text evidence="2 4 5 7">Dimer of dimers.</text>
</comment>
<comment type="induction">
    <text evidence="12">Repressed by iron.</text>
</comment>
<comment type="sequence caution" evidence="11">
    <conflict type="erroneous initiation">
        <sequence resource="EMBL-CDS" id="CAA57968"/>
    </conflict>
    <text>Extended N-terminus.</text>
</comment>
<evidence type="ECO:0000255" key="1">
    <source>
        <dbReference type="PROSITE-ProRule" id="PRU00515"/>
    </source>
</evidence>
<evidence type="ECO:0000269" key="2">
    <source>
    </source>
</evidence>
<evidence type="ECO:0000269" key="3">
    <source>
    </source>
</evidence>
<evidence type="ECO:0000269" key="4">
    <source>
    </source>
</evidence>
<evidence type="ECO:0000269" key="5">
    <source>
    </source>
</evidence>
<evidence type="ECO:0000269" key="6">
    <source>
    </source>
</evidence>
<evidence type="ECO:0000269" key="7">
    <source>
    </source>
</evidence>
<evidence type="ECO:0000269" key="8">
    <source>
    </source>
</evidence>
<evidence type="ECO:0000303" key="9">
    <source>
    </source>
</evidence>
<evidence type="ECO:0000303" key="10">
    <source>
    </source>
</evidence>
<evidence type="ECO:0000305" key="11"/>
<evidence type="ECO:0000305" key="12">
    <source>
    </source>
</evidence>
<evidence type="ECO:0007829" key="13">
    <source>
        <dbReference type="PDB" id="3RET"/>
    </source>
</evidence>
<accession>Q51507</accession>
<name>PCHB_PSEAE</name>
<organism>
    <name type="scientific">Pseudomonas aeruginosa (strain ATCC 15692 / DSM 22644 / CIP 104116 / JCM 14847 / LMG 12228 / 1C / PRS 101 / PAO1)</name>
    <dbReference type="NCBI Taxonomy" id="208964"/>
    <lineage>
        <taxon>Bacteria</taxon>
        <taxon>Pseudomonadati</taxon>
        <taxon>Pseudomonadota</taxon>
        <taxon>Gammaproteobacteria</taxon>
        <taxon>Pseudomonadales</taxon>
        <taxon>Pseudomonadaceae</taxon>
        <taxon>Pseudomonas</taxon>
    </lineage>
</organism>
<sequence length="101" mass="11432">MKTPEDCTGLADIREAIDRIDLDIVQALGRRMDYVKAASRFKASEAAIPAPERVAAMLPERARWAEENGLDAPFVEGLFAQIIHWYIAEQIKYWRQTRGAA</sequence>